<sequence length="266" mass="31322">MTQYYFLSSFLPTQLPESVPLFSISDLDDLLYLNLSENDLCNYGLLKRFFDFENFAFFWAGKPIPFSFGEVTQENVERMLSSQQWSDDNDFEDFFKDFLMNHKSSQDRLNHFSDLFREFLSYHQTNSSKFLRDYFRFQQQLRVVLAGFRARVLNMDVSYVLRDEDSSDPVVLEVLMQKDSPNYELPEEFSDLQGVLDDYGLLPHTLNRALALYQFHKLEGFCSDSYFDGNVILARCATYMFAIRNSLASVEKGREIINHIEKAIKW</sequence>
<accession>Q9Z994</accession>
<accession>Q9JS60</accession>
<proteinExistence type="inferred from homology"/>
<reference key="1">
    <citation type="journal article" date="1999" name="Nat. Genet.">
        <title>Comparative genomes of Chlamydia pneumoniae and C. trachomatis.</title>
        <authorList>
            <person name="Kalman S."/>
            <person name="Mitchell W.P."/>
            <person name="Marathe R."/>
            <person name="Lammel C.J."/>
            <person name="Fan J."/>
            <person name="Hyman R.W."/>
            <person name="Olinger L."/>
            <person name="Grimwood J."/>
            <person name="Davis R.W."/>
            <person name="Stephens R.S."/>
        </authorList>
    </citation>
    <scope>NUCLEOTIDE SEQUENCE [LARGE SCALE GENOMIC DNA]</scope>
    <source>
        <strain>CWL029</strain>
    </source>
</reference>
<reference key="2">
    <citation type="journal article" date="2000" name="Nucleic Acids Res.">
        <title>Genome sequences of Chlamydia trachomatis MoPn and Chlamydia pneumoniae AR39.</title>
        <authorList>
            <person name="Read T.D."/>
            <person name="Brunham R.C."/>
            <person name="Shen C."/>
            <person name="Gill S.R."/>
            <person name="Heidelberg J.F."/>
            <person name="White O."/>
            <person name="Hickey E.K."/>
            <person name="Peterson J.D."/>
            <person name="Utterback T.R."/>
            <person name="Berry K.J."/>
            <person name="Bass S."/>
            <person name="Linher K.D."/>
            <person name="Weidman J.F."/>
            <person name="Khouri H.M."/>
            <person name="Craven B."/>
            <person name="Bowman C."/>
            <person name="Dodson R.J."/>
            <person name="Gwinn M.L."/>
            <person name="Nelson W.C."/>
            <person name="DeBoy R.T."/>
            <person name="Kolonay J.F."/>
            <person name="McClarty G."/>
            <person name="Salzberg S.L."/>
            <person name="Eisen J.A."/>
            <person name="Fraser C.M."/>
        </authorList>
    </citation>
    <scope>NUCLEOTIDE SEQUENCE [LARGE SCALE GENOMIC DNA]</scope>
    <source>
        <strain>AR39</strain>
    </source>
</reference>
<reference key="3">
    <citation type="journal article" date="2000" name="Nucleic Acids Res.">
        <title>Comparison of whole genome sequences of Chlamydia pneumoniae J138 from Japan and CWL029 from USA.</title>
        <authorList>
            <person name="Shirai M."/>
            <person name="Hirakawa H."/>
            <person name="Kimoto M."/>
            <person name="Tabuchi M."/>
            <person name="Kishi F."/>
            <person name="Ouchi K."/>
            <person name="Shiba T."/>
            <person name="Ishii K."/>
            <person name="Hattori M."/>
            <person name="Kuhara S."/>
            <person name="Nakazawa T."/>
        </authorList>
    </citation>
    <scope>NUCLEOTIDE SEQUENCE [LARGE SCALE GENOMIC DNA]</scope>
    <source>
        <strain>J138</strain>
    </source>
</reference>
<reference key="4">
    <citation type="submission" date="2002-05" db="EMBL/GenBank/DDBJ databases">
        <title>The genome sequence of Chlamydia pneumoniae TW183 and comparison with other Chlamydia strains based on whole genome sequence analysis.</title>
        <authorList>
            <person name="Geng M.M."/>
            <person name="Schuhmacher A."/>
            <person name="Muehldorfer I."/>
            <person name="Bensch K.W."/>
            <person name="Schaefer K.P."/>
            <person name="Schneider S."/>
            <person name="Pohl T."/>
            <person name="Essig A."/>
            <person name="Marre R."/>
            <person name="Melchers K."/>
        </authorList>
    </citation>
    <scope>NUCLEOTIDE SEQUENCE [LARGE SCALE GENOMIC DNA]</scope>
    <source>
        <strain>TW-183</strain>
    </source>
</reference>
<comment type="similarity">
    <text evidence="1">Belongs to the chlamydial CPn_0087/CT_309/TC_0583 family.</text>
</comment>
<organism>
    <name type="scientific">Chlamydia pneumoniae</name>
    <name type="common">Chlamydophila pneumoniae</name>
    <dbReference type="NCBI Taxonomy" id="83558"/>
    <lineage>
        <taxon>Bacteria</taxon>
        <taxon>Pseudomonadati</taxon>
        <taxon>Chlamydiota</taxon>
        <taxon>Chlamydiia</taxon>
        <taxon>Chlamydiales</taxon>
        <taxon>Chlamydiaceae</taxon>
        <taxon>Chlamydia/Chlamydophila group</taxon>
        <taxon>Chlamydia</taxon>
    </lineage>
</organism>
<feature type="chain" id="PRO_0000218355" description="Uncharacterized protein CPn_0087/CP_0687/CPj0087/CpB0087">
    <location>
        <begin position="1"/>
        <end position="266"/>
    </location>
</feature>
<feature type="sequence variant" description="In strain: CWL029 and TW-183.">
    <original>R</original>
    <variation>Q</variation>
    <location>
        <position position="132"/>
    </location>
</feature>
<feature type="sequence conflict" description="In Ref. 4; AAP98020." evidence="1" ref="4">
    <original>V</original>
    <variation>I</variation>
    <location>
        <position position="76"/>
    </location>
</feature>
<protein>
    <recommendedName>
        <fullName>Uncharacterized protein CPn_0087/CP_0687/CPj0087/CpB0087</fullName>
    </recommendedName>
</protein>
<evidence type="ECO:0000305" key="1"/>
<gene>
    <name type="ordered locus">CPn_0087</name>
    <name type="ordered locus">CP_0687</name>
    <name type="ordered locus">CPj0087</name>
    <name type="ordered locus">CpB0087</name>
</gene>
<dbReference type="EMBL" id="AE001363">
    <property type="protein sequence ID" value="AAD18240.1"/>
    <property type="molecule type" value="Genomic_DNA"/>
</dbReference>
<dbReference type="EMBL" id="AE002161">
    <property type="protein sequence ID" value="AAF38496.1"/>
    <property type="molecule type" value="Genomic_DNA"/>
</dbReference>
<dbReference type="EMBL" id="BA000008">
    <property type="protein sequence ID" value="BAA98297.1"/>
    <property type="molecule type" value="Genomic_DNA"/>
</dbReference>
<dbReference type="EMBL" id="AE009440">
    <property type="protein sequence ID" value="AAP98020.1"/>
    <property type="molecule type" value="Genomic_DNA"/>
</dbReference>
<dbReference type="PIR" id="A72121">
    <property type="entry name" value="A72121"/>
</dbReference>
<dbReference type="PIR" id="G86501">
    <property type="entry name" value="G86501"/>
</dbReference>
<dbReference type="PIR" id="H81549">
    <property type="entry name" value="H81549"/>
</dbReference>
<dbReference type="RefSeq" id="NP_224295.1">
    <property type="nucleotide sequence ID" value="NC_000922.1"/>
</dbReference>
<dbReference type="STRING" id="406984.CPK_ORF00597"/>
<dbReference type="GeneID" id="45050132"/>
<dbReference type="KEGG" id="cpa:CP_0687"/>
<dbReference type="KEGG" id="cpj:CPj0087"/>
<dbReference type="KEGG" id="cpn:CPn_0087"/>
<dbReference type="KEGG" id="cpt:CpB0087"/>
<dbReference type="PATRIC" id="fig|115713.3.peg.100"/>
<dbReference type="eggNOG" id="ENOG502ZC7E">
    <property type="taxonomic scope" value="Bacteria"/>
</dbReference>
<dbReference type="HOGENOM" id="CLU_091270_0_0_0"/>
<dbReference type="Proteomes" id="UP000000583">
    <property type="component" value="Chromosome"/>
</dbReference>
<dbReference type="Proteomes" id="UP000000801">
    <property type="component" value="Chromosome"/>
</dbReference>
<dbReference type="InterPro" id="IPR024492">
    <property type="entry name" value="DUF2764"/>
</dbReference>
<dbReference type="Pfam" id="PF10962">
    <property type="entry name" value="DUF2764"/>
    <property type="match status" value="1"/>
</dbReference>
<name>Y087_CHLPN</name>